<keyword id="KW-0963">Cytoplasm</keyword>
<keyword id="KW-0489">Methyltransferase</keyword>
<keyword id="KW-0949">S-adenosyl-L-methionine</keyword>
<keyword id="KW-0808">Transferase</keyword>
<keyword id="KW-0819">tRNA processing</keyword>
<feature type="chain" id="PRO_1000130222" description="tRNA (guanine-N(1)-)-methyltransferase">
    <location>
        <begin position="1"/>
        <end position="228"/>
    </location>
</feature>
<feature type="binding site" evidence="1">
    <location>
        <position position="111"/>
    </location>
    <ligand>
        <name>S-adenosyl-L-methionine</name>
        <dbReference type="ChEBI" id="CHEBI:59789"/>
    </ligand>
</feature>
<feature type="binding site" evidence="1">
    <location>
        <begin position="130"/>
        <end position="135"/>
    </location>
    <ligand>
        <name>S-adenosyl-L-methionine</name>
        <dbReference type="ChEBI" id="CHEBI:59789"/>
    </ligand>
</feature>
<accession>B5ZC78</accession>
<dbReference type="EC" id="2.1.1.228" evidence="1"/>
<dbReference type="EMBL" id="CP001184">
    <property type="protein sequence ID" value="ACI60363.1"/>
    <property type="molecule type" value="Genomic_DNA"/>
</dbReference>
<dbReference type="RefSeq" id="WP_004026001.1">
    <property type="nucleotide sequence ID" value="NC_011374.1"/>
</dbReference>
<dbReference type="SMR" id="B5ZC78"/>
<dbReference type="STRING" id="565575.UUR10_0664"/>
<dbReference type="GeneID" id="93849116"/>
<dbReference type="KEGG" id="uue:UUR10_0664"/>
<dbReference type="eggNOG" id="COG0336">
    <property type="taxonomic scope" value="Bacteria"/>
</dbReference>
<dbReference type="HOGENOM" id="CLU_047363_0_1_14"/>
<dbReference type="OrthoDB" id="9807416at2"/>
<dbReference type="Proteomes" id="UP000002018">
    <property type="component" value="Chromosome"/>
</dbReference>
<dbReference type="GO" id="GO:0005829">
    <property type="term" value="C:cytosol"/>
    <property type="evidence" value="ECO:0007669"/>
    <property type="project" value="TreeGrafter"/>
</dbReference>
<dbReference type="GO" id="GO:0052906">
    <property type="term" value="F:tRNA (guanine(37)-N1)-methyltransferase activity"/>
    <property type="evidence" value="ECO:0007669"/>
    <property type="project" value="UniProtKB-UniRule"/>
</dbReference>
<dbReference type="GO" id="GO:0002939">
    <property type="term" value="P:tRNA N1-guanine methylation"/>
    <property type="evidence" value="ECO:0007669"/>
    <property type="project" value="TreeGrafter"/>
</dbReference>
<dbReference type="CDD" id="cd18080">
    <property type="entry name" value="TrmD-like"/>
    <property type="match status" value="1"/>
</dbReference>
<dbReference type="FunFam" id="3.40.1280.10:FF:000001">
    <property type="entry name" value="tRNA (guanine-N(1)-)-methyltransferase"/>
    <property type="match status" value="1"/>
</dbReference>
<dbReference type="Gene3D" id="3.40.1280.10">
    <property type="match status" value="1"/>
</dbReference>
<dbReference type="Gene3D" id="1.10.1270.20">
    <property type="entry name" value="tRNA(m1g37)methyltransferase, domain 2"/>
    <property type="match status" value="1"/>
</dbReference>
<dbReference type="HAMAP" id="MF_00605">
    <property type="entry name" value="TrmD"/>
    <property type="match status" value="1"/>
</dbReference>
<dbReference type="InterPro" id="IPR029028">
    <property type="entry name" value="Alpha/beta_knot_MTases"/>
</dbReference>
<dbReference type="InterPro" id="IPR023148">
    <property type="entry name" value="tRNA_m1G_MeTrfase_C_sf"/>
</dbReference>
<dbReference type="InterPro" id="IPR002649">
    <property type="entry name" value="tRNA_m1G_MeTrfase_TrmD"/>
</dbReference>
<dbReference type="InterPro" id="IPR029026">
    <property type="entry name" value="tRNA_m1G_MTases_N"/>
</dbReference>
<dbReference type="InterPro" id="IPR016009">
    <property type="entry name" value="tRNA_MeTrfase_TRMD/TRM10"/>
</dbReference>
<dbReference type="NCBIfam" id="NF000648">
    <property type="entry name" value="PRK00026.1"/>
    <property type="match status" value="1"/>
</dbReference>
<dbReference type="NCBIfam" id="TIGR00088">
    <property type="entry name" value="trmD"/>
    <property type="match status" value="1"/>
</dbReference>
<dbReference type="PANTHER" id="PTHR46417">
    <property type="entry name" value="TRNA (GUANINE-N(1)-)-METHYLTRANSFERASE"/>
    <property type="match status" value="1"/>
</dbReference>
<dbReference type="PANTHER" id="PTHR46417:SF1">
    <property type="entry name" value="TRNA (GUANINE-N(1)-)-METHYLTRANSFERASE"/>
    <property type="match status" value="1"/>
</dbReference>
<dbReference type="Pfam" id="PF01746">
    <property type="entry name" value="tRNA_m1G_MT"/>
    <property type="match status" value="1"/>
</dbReference>
<dbReference type="PIRSF" id="PIRSF000386">
    <property type="entry name" value="tRNA_mtase"/>
    <property type="match status" value="1"/>
</dbReference>
<dbReference type="SUPFAM" id="SSF75217">
    <property type="entry name" value="alpha/beta knot"/>
    <property type="match status" value="1"/>
</dbReference>
<gene>
    <name evidence="1" type="primary">trmD</name>
    <name type="ordered locus">UUR10_0664</name>
</gene>
<sequence length="228" mass="26088">MKISILSLFPELYETWINHSIISNAIKNNQVTIEIINFRLYTNDKHKKVDDYQYGGGAGMVLMIEPIVSAIRAIRTPNSYVILTTPKGQVFNQELANEFVSKYDHIIIIAGHYEGFDERINYYVDAQYSIGDFVLTGGELPSMVISDAVIRLLDGVISSSSLESESFNNYLLDYPVYTRPVVFEGHQVPDVLLSGHHKNIADFRKQQQEMITKKNRPDLYQKYLNSKK</sequence>
<proteinExistence type="inferred from homology"/>
<name>TRMD_UREU1</name>
<evidence type="ECO:0000255" key="1">
    <source>
        <dbReference type="HAMAP-Rule" id="MF_00605"/>
    </source>
</evidence>
<organism>
    <name type="scientific">Ureaplasma urealyticum serovar 10 (strain ATCC 33699 / Western)</name>
    <dbReference type="NCBI Taxonomy" id="565575"/>
    <lineage>
        <taxon>Bacteria</taxon>
        <taxon>Bacillati</taxon>
        <taxon>Mycoplasmatota</taxon>
        <taxon>Mycoplasmoidales</taxon>
        <taxon>Mycoplasmoidaceae</taxon>
        <taxon>Ureaplasma</taxon>
    </lineage>
</organism>
<comment type="function">
    <text evidence="1">Specifically methylates guanosine-37 in various tRNAs.</text>
</comment>
<comment type="catalytic activity">
    <reaction evidence="1">
        <text>guanosine(37) in tRNA + S-adenosyl-L-methionine = N(1)-methylguanosine(37) in tRNA + S-adenosyl-L-homocysteine + H(+)</text>
        <dbReference type="Rhea" id="RHEA:36899"/>
        <dbReference type="Rhea" id="RHEA-COMP:10145"/>
        <dbReference type="Rhea" id="RHEA-COMP:10147"/>
        <dbReference type="ChEBI" id="CHEBI:15378"/>
        <dbReference type="ChEBI" id="CHEBI:57856"/>
        <dbReference type="ChEBI" id="CHEBI:59789"/>
        <dbReference type="ChEBI" id="CHEBI:73542"/>
        <dbReference type="ChEBI" id="CHEBI:74269"/>
        <dbReference type="EC" id="2.1.1.228"/>
    </reaction>
</comment>
<comment type="subunit">
    <text evidence="1">Homodimer.</text>
</comment>
<comment type="subcellular location">
    <subcellularLocation>
        <location evidence="1">Cytoplasm</location>
    </subcellularLocation>
</comment>
<comment type="similarity">
    <text evidence="1">Belongs to the RNA methyltransferase TrmD family.</text>
</comment>
<reference key="1">
    <citation type="submission" date="2008-10" db="EMBL/GenBank/DDBJ databases">
        <title>Genome sequence of Ureaplasma urealyticum serovar 10 ATCC-33699.</title>
        <authorList>
            <person name="Shrivastava S."/>
            <person name="Methe B.A."/>
            <person name="Glass J."/>
            <person name="White K."/>
            <person name="Duffy L.B."/>
        </authorList>
    </citation>
    <scope>NUCLEOTIDE SEQUENCE [LARGE SCALE GENOMIC DNA]</scope>
    <source>
        <strain>ATCC 33699 / Western</strain>
    </source>
</reference>
<protein>
    <recommendedName>
        <fullName evidence="1">tRNA (guanine-N(1)-)-methyltransferase</fullName>
        <ecNumber evidence="1">2.1.1.228</ecNumber>
    </recommendedName>
    <alternativeName>
        <fullName evidence="1">M1G-methyltransferase</fullName>
    </alternativeName>
    <alternativeName>
        <fullName evidence="1">tRNA [GM37] methyltransferase</fullName>
    </alternativeName>
</protein>